<accession>Q9ZT94</accession>
<accession>J7MCQ0</accession>
<accession>Q9SXQ2</accession>
<feature type="chain" id="PRO_0000441909" description="Retrovirus-related Pol polyprotein from transposon RE2">
    <location>
        <begin position="1"/>
        <end position="1456"/>
    </location>
</feature>
<feature type="domain" description="Integrase catalytic" evidence="4">
    <location>
        <begin position="498"/>
        <end position="661"/>
    </location>
</feature>
<feature type="domain" description="Reverse transcriptase Ty1/copia-type" evidence="2">
    <location>
        <begin position="965"/>
        <end position="1208"/>
    </location>
</feature>
<feature type="zinc finger region" description="CCHC-type" evidence="3">
    <location>
        <begin position="257"/>
        <end position="273"/>
    </location>
</feature>
<feature type="region of interest" description="Disordered" evidence="5">
    <location>
        <begin position="205"/>
        <end position="252"/>
    </location>
</feature>
<feature type="region of interest" description="Disordered" evidence="5">
    <location>
        <begin position="276"/>
        <end position="295"/>
    </location>
</feature>
<feature type="region of interest" description="Disordered" evidence="5">
    <location>
        <begin position="738"/>
        <end position="896"/>
    </location>
</feature>
<feature type="compositionally biased region" description="Low complexity" evidence="5">
    <location>
        <begin position="210"/>
        <end position="245"/>
    </location>
</feature>
<feature type="compositionally biased region" description="Low complexity" evidence="5">
    <location>
        <begin position="276"/>
        <end position="291"/>
    </location>
</feature>
<feature type="compositionally biased region" description="Polar residues" evidence="5">
    <location>
        <begin position="738"/>
        <end position="754"/>
    </location>
</feature>
<feature type="compositionally biased region" description="Low complexity" evidence="5">
    <location>
        <begin position="793"/>
        <end position="814"/>
    </location>
</feature>
<feature type="compositionally biased region" description="Polar residues" evidence="5">
    <location>
        <begin position="816"/>
        <end position="827"/>
    </location>
</feature>
<feature type="compositionally biased region" description="Low complexity" evidence="5">
    <location>
        <begin position="828"/>
        <end position="841"/>
    </location>
</feature>
<feature type="compositionally biased region" description="Low complexity" evidence="5">
    <location>
        <begin position="849"/>
        <end position="886"/>
    </location>
</feature>
<feature type="compositionally biased region" description="Pro residues" evidence="5">
    <location>
        <begin position="887"/>
        <end position="896"/>
    </location>
</feature>
<feature type="active site" description="For protease activity" evidence="1">
    <location>
        <position position="313"/>
    </location>
</feature>
<feature type="binding site" evidence="4">
    <location>
        <position position="509"/>
    </location>
    <ligand>
        <name>Mg(2+)</name>
        <dbReference type="ChEBI" id="CHEBI:18420"/>
        <note>catalytic</note>
    </ligand>
</feature>
<feature type="binding site" evidence="4">
    <location>
        <position position="571"/>
    </location>
    <ligand>
        <name>Mg(2+)</name>
        <dbReference type="ChEBI" id="CHEBI:18420"/>
        <note>catalytic</note>
    </ligand>
</feature>
<feature type="sequence variant" description="In strain: cv. Ts-1 and cv. No-0." evidence="6">
    <original>R</original>
    <variation>RTQLKQWTKGAKTIDDYMQG</variation>
    <location>
        <position position="129"/>
    </location>
</feature>
<feature type="sequence conflict" description="In Ref. 2; BAM42647/BAM42648." evidence="8" ref="2">
    <original>R</original>
    <variation>Q</variation>
    <location>
        <position position="187"/>
    </location>
</feature>
<feature type="sequence conflict" description="In Ref. 2; BAM42647/BAM42648." evidence="8" ref="2">
    <original>H</original>
    <variation>Y</variation>
    <location>
        <position position="815"/>
    </location>
</feature>
<feature type="sequence conflict" description="In Ref. 2; BAM42647/BAM42648." evidence="8" ref="2">
    <original>R</original>
    <variation>L</variation>
    <location>
        <position position="1431"/>
    </location>
</feature>
<proteinExistence type="predicted"/>
<reference key="1">
    <citation type="journal article" date="2000" name="Gene">
        <title>Isolation and characterization of copia-type retrotransposons in Arabidopsis thaliana.</title>
        <authorList>
            <person name="Kuwahara A."/>
            <person name="Kato A."/>
            <person name="Komeda Y."/>
        </authorList>
    </citation>
    <scope>NUCLEOTIDE SEQUENCE [GENOMIC DNA]</scope>
    <scope>GENE FAMILY</scope>
    <scope>NOMENCLATURE</scope>
    <source>
        <strain>cv. Columbia</strain>
    </source>
</reference>
<reference key="2">
    <citation type="journal article" date="2014" name="Mol. Genet. Genomics">
        <title>Genomic localization of AtRE1 and AtRE2, copia-type retrotransposons, in natural variants of Arabidopsis thaliana.</title>
        <authorList>
            <person name="Yamada M."/>
            <person name="Yamagishi Y."/>
            <person name="Akaoka M."/>
            <person name="Ito H."/>
            <person name="Kato A."/>
        </authorList>
    </citation>
    <scope>NUCLEOTIDE SEQUENCE [GENOMIC DNA]</scope>
    <scope>VARIANT THR-GLN-LEU-LYS-GLN-TRP-THR-LYS-GLY-ALA-LYS-THR-ILE-ASP-ASP-TYR-MET-GLN-GLY-129 INS</scope>
    <source>
        <strain>cv. Is-1</strain>
        <strain>cv. No-0</strain>
        <strain>cv. Ts-1</strain>
    </source>
</reference>
<reference key="3">
    <citation type="journal article" date="1999" name="Nature">
        <title>Sequence and analysis of chromosome 4 of the plant Arabidopsis thaliana.</title>
        <authorList>
            <person name="Mayer K.F.X."/>
            <person name="Schueller C."/>
            <person name="Wambutt R."/>
            <person name="Murphy G."/>
            <person name="Volckaert G."/>
            <person name="Pohl T."/>
            <person name="Duesterhoeft A."/>
            <person name="Stiekema W."/>
            <person name="Entian K.-D."/>
            <person name="Terryn N."/>
            <person name="Harris B."/>
            <person name="Ansorge W."/>
            <person name="Brandt P."/>
            <person name="Grivell L.A."/>
            <person name="Rieger M."/>
            <person name="Weichselgartner M."/>
            <person name="de Simone V."/>
            <person name="Obermaier B."/>
            <person name="Mache R."/>
            <person name="Mueller M."/>
            <person name="Kreis M."/>
            <person name="Delseny M."/>
            <person name="Puigdomenech P."/>
            <person name="Watson M."/>
            <person name="Schmidtheini T."/>
            <person name="Reichert B."/>
            <person name="Portetelle D."/>
            <person name="Perez-Alonso M."/>
            <person name="Boutry M."/>
            <person name="Bancroft I."/>
            <person name="Vos P."/>
            <person name="Hoheisel J."/>
            <person name="Zimmermann W."/>
            <person name="Wedler H."/>
            <person name="Ridley P."/>
            <person name="Langham S.-A."/>
            <person name="McCullagh B."/>
            <person name="Bilham L."/>
            <person name="Robben J."/>
            <person name="van der Schueren J."/>
            <person name="Grymonprez B."/>
            <person name="Chuang Y.-J."/>
            <person name="Vandenbussche F."/>
            <person name="Braeken M."/>
            <person name="Weltjens I."/>
            <person name="Voet M."/>
            <person name="Bastiaens I."/>
            <person name="Aert R."/>
            <person name="Defoor E."/>
            <person name="Weitzenegger T."/>
            <person name="Bothe G."/>
            <person name="Ramsperger U."/>
            <person name="Hilbert H."/>
            <person name="Braun M."/>
            <person name="Holzer E."/>
            <person name="Brandt A."/>
            <person name="Peters S."/>
            <person name="van Staveren M."/>
            <person name="Dirkse W."/>
            <person name="Mooijman P."/>
            <person name="Klein Lankhorst R."/>
            <person name="Rose M."/>
            <person name="Hauf J."/>
            <person name="Koetter P."/>
            <person name="Berneiser S."/>
            <person name="Hempel S."/>
            <person name="Feldpausch M."/>
            <person name="Lamberth S."/>
            <person name="Van den Daele H."/>
            <person name="De Keyser A."/>
            <person name="Buysshaert C."/>
            <person name="Gielen J."/>
            <person name="Villarroel R."/>
            <person name="De Clercq R."/>
            <person name="van Montagu M."/>
            <person name="Rogers J."/>
            <person name="Cronin A."/>
            <person name="Quail M.A."/>
            <person name="Bray-Allen S."/>
            <person name="Clark L."/>
            <person name="Doggett J."/>
            <person name="Hall S."/>
            <person name="Kay M."/>
            <person name="Lennard N."/>
            <person name="McLay K."/>
            <person name="Mayes R."/>
            <person name="Pettett A."/>
            <person name="Rajandream M.A."/>
            <person name="Lyne M."/>
            <person name="Benes V."/>
            <person name="Rechmann S."/>
            <person name="Borkova D."/>
            <person name="Bloecker H."/>
            <person name="Scharfe M."/>
            <person name="Grimm M."/>
            <person name="Loehnert T.-H."/>
            <person name="Dose S."/>
            <person name="de Haan M."/>
            <person name="Maarse A.C."/>
            <person name="Schaefer M."/>
            <person name="Mueller-Auer S."/>
            <person name="Gabel C."/>
            <person name="Fuchs M."/>
            <person name="Fartmann B."/>
            <person name="Granderath K."/>
            <person name="Dauner D."/>
            <person name="Herzl A."/>
            <person name="Neumann S."/>
            <person name="Argiriou A."/>
            <person name="Vitale D."/>
            <person name="Liguori R."/>
            <person name="Piravandi E."/>
            <person name="Massenet O."/>
            <person name="Quigley F."/>
            <person name="Clabauld G."/>
            <person name="Muendlein A."/>
            <person name="Felber R."/>
            <person name="Schnabl S."/>
            <person name="Hiller R."/>
            <person name="Schmidt W."/>
            <person name="Lecharny A."/>
            <person name="Aubourg S."/>
            <person name="Chefdor F."/>
            <person name="Cooke R."/>
            <person name="Berger C."/>
            <person name="Monfort A."/>
            <person name="Casacuberta E."/>
            <person name="Gibbons T."/>
            <person name="Weber N."/>
            <person name="Vandenbol M."/>
            <person name="Bargues M."/>
            <person name="Terol J."/>
            <person name="Torres A."/>
            <person name="Perez-Perez A."/>
            <person name="Purnelle B."/>
            <person name="Bent E."/>
            <person name="Johnson S."/>
            <person name="Tacon D."/>
            <person name="Jesse T."/>
            <person name="Heijnen L."/>
            <person name="Schwarz S."/>
            <person name="Scholler P."/>
            <person name="Heber S."/>
            <person name="Francs P."/>
            <person name="Bielke C."/>
            <person name="Frishman D."/>
            <person name="Haase D."/>
            <person name="Lemcke K."/>
            <person name="Mewes H.-W."/>
            <person name="Stocker S."/>
            <person name="Zaccaria P."/>
            <person name="Bevan M."/>
            <person name="Wilson R.K."/>
            <person name="de la Bastide M."/>
            <person name="Habermann K."/>
            <person name="Parnell L."/>
            <person name="Dedhia N."/>
            <person name="Gnoj L."/>
            <person name="Schutz K."/>
            <person name="Huang E."/>
            <person name="Spiegel L."/>
            <person name="Sekhon M."/>
            <person name="Murray J."/>
            <person name="Sheet P."/>
            <person name="Cordes M."/>
            <person name="Abu-Threideh J."/>
            <person name="Stoneking T."/>
            <person name="Kalicki J."/>
            <person name="Graves T."/>
            <person name="Harmon G."/>
            <person name="Edwards J."/>
            <person name="Latreille P."/>
            <person name="Courtney L."/>
            <person name="Cloud J."/>
            <person name="Abbott A."/>
            <person name="Scott K."/>
            <person name="Johnson D."/>
            <person name="Minx P."/>
            <person name="Bentley D."/>
            <person name="Fulton B."/>
            <person name="Miller N."/>
            <person name="Greco T."/>
            <person name="Kemp K."/>
            <person name="Kramer J."/>
            <person name="Fulton L."/>
            <person name="Mardis E."/>
            <person name="Dante M."/>
            <person name="Pepin K."/>
            <person name="Hillier L.W."/>
            <person name="Nelson J."/>
            <person name="Spieth J."/>
            <person name="Ryan E."/>
            <person name="Andrews S."/>
            <person name="Geisel C."/>
            <person name="Layman D."/>
            <person name="Du H."/>
            <person name="Ali J."/>
            <person name="Berghoff A."/>
            <person name="Jones K."/>
            <person name="Drone K."/>
            <person name="Cotton M."/>
            <person name="Joshu C."/>
            <person name="Antonoiu B."/>
            <person name="Zidanic M."/>
            <person name="Strong C."/>
            <person name="Sun H."/>
            <person name="Lamar B."/>
            <person name="Yordan C."/>
            <person name="Ma P."/>
            <person name="Zhong J."/>
            <person name="Preston R."/>
            <person name="Vil D."/>
            <person name="Shekher M."/>
            <person name="Matero A."/>
            <person name="Shah R."/>
            <person name="Swaby I.K."/>
            <person name="O'Shaughnessy A."/>
            <person name="Rodriguez M."/>
            <person name="Hoffman J."/>
            <person name="Till S."/>
            <person name="Granat S."/>
            <person name="Shohdy N."/>
            <person name="Hasegawa A."/>
            <person name="Hameed A."/>
            <person name="Lodhi M."/>
            <person name="Johnson A."/>
            <person name="Chen E."/>
            <person name="Marra M.A."/>
            <person name="Martienssen R."/>
            <person name="McCombie W.R."/>
        </authorList>
    </citation>
    <scope>NUCLEOTIDE SEQUENCE [LARGE SCALE GENOMIC DNA]</scope>
    <source>
        <strain>cv. Columbia</strain>
    </source>
</reference>
<reference key="4">
    <citation type="journal article" date="2017" name="Plant J.">
        <title>Araport11: a complete reannotation of the Arabidopsis thaliana reference genome.</title>
        <authorList>
            <person name="Cheng C.Y."/>
            <person name="Krishnakumar V."/>
            <person name="Chan A.P."/>
            <person name="Thibaud-Nissen F."/>
            <person name="Schobel S."/>
            <person name="Town C.D."/>
        </authorList>
    </citation>
    <scope>GENOME REANNOTATION</scope>
    <source>
        <strain>cv. Columbia</strain>
    </source>
</reference>
<organism>
    <name type="scientific">Arabidopsis thaliana</name>
    <name type="common">Mouse-ear cress</name>
    <dbReference type="NCBI Taxonomy" id="3702"/>
    <lineage>
        <taxon>Eukaryota</taxon>
        <taxon>Viridiplantae</taxon>
        <taxon>Streptophyta</taxon>
        <taxon>Embryophyta</taxon>
        <taxon>Tracheophyta</taxon>
        <taxon>Spermatophyta</taxon>
        <taxon>Magnoliopsida</taxon>
        <taxon>eudicotyledons</taxon>
        <taxon>Gunneridae</taxon>
        <taxon>Pentapetalae</taxon>
        <taxon>rosids</taxon>
        <taxon>malvids</taxon>
        <taxon>Brassicales</taxon>
        <taxon>Brassicaceae</taxon>
        <taxon>Camelineae</taxon>
        <taxon>Arabidopsis</taxon>
    </lineage>
</organism>
<evidence type="ECO:0000250" key="1"/>
<evidence type="ECO:0000255" key="2"/>
<evidence type="ECO:0000255" key="3">
    <source>
        <dbReference type="PROSITE-ProRule" id="PRU00047"/>
    </source>
</evidence>
<evidence type="ECO:0000255" key="4">
    <source>
        <dbReference type="PROSITE-ProRule" id="PRU00457"/>
    </source>
</evidence>
<evidence type="ECO:0000256" key="5">
    <source>
        <dbReference type="SAM" id="MobiDB-lite"/>
    </source>
</evidence>
<evidence type="ECO:0000269" key="6">
    <source>
    </source>
</evidence>
<evidence type="ECO:0000303" key="7">
    <source>
    </source>
</evidence>
<evidence type="ECO:0000305" key="8"/>
<evidence type="ECO:0000312" key="9">
    <source>
        <dbReference type="EMBL" id="AAC79110.1"/>
    </source>
</evidence>
<evidence type="ECO:0000312" key="10">
    <source>
        <dbReference type="EMBL" id="CAB77781.1"/>
    </source>
</evidence>
<dbReference type="EC" id="3.4.23.-"/>
<dbReference type="EC" id="2.7.7.49"/>
<dbReference type="EMBL" id="AB021264">
    <property type="protein sequence ID" value="BAA78424.1"/>
    <property type="status" value="ALT_SEQ"/>
    <property type="molecule type" value="Genomic_DNA"/>
</dbReference>
<dbReference type="EMBL" id="AB701744">
    <property type="protein sequence ID" value="BAM42647.1"/>
    <property type="molecule type" value="Genomic_DNA"/>
</dbReference>
<dbReference type="EMBL" id="AB701745">
    <property type="protein sequence ID" value="BAM42648.1"/>
    <property type="molecule type" value="Genomic_DNA"/>
</dbReference>
<dbReference type="EMBL" id="AB703312">
    <property type="protein sequence ID" value="BAM44533.1"/>
    <property type="status" value="ALT_SEQ"/>
    <property type="molecule type" value="Genomic_DNA"/>
</dbReference>
<dbReference type="EMBL" id="AF069442">
    <property type="protein sequence ID" value="AAC79110.1"/>
    <property type="molecule type" value="Genomic_DNA"/>
</dbReference>
<dbReference type="EMBL" id="AL161495">
    <property type="protein sequence ID" value="CAB77781.1"/>
    <property type="molecule type" value="Genomic_DNA"/>
</dbReference>
<dbReference type="EMBL" id="CP002687">
    <property type="status" value="NOT_ANNOTATED_CDS"/>
    <property type="molecule type" value="Genomic_DNA"/>
</dbReference>
<dbReference type="PIR" id="T01397">
    <property type="entry name" value="T01397"/>
</dbReference>
<dbReference type="SMR" id="Q9ZT94"/>
<dbReference type="FunCoup" id="Q9ZT94">
    <property type="interactions" value="10"/>
</dbReference>
<dbReference type="STRING" id="3702.Q9ZT94"/>
<dbReference type="MEROPS" id="A11.004"/>
<dbReference type="GlyGen" id="Q9ZT94">
    <property type="glycosylation" value="1 site"/>
</dbReference>
<dbReference type="PeptideAtlas" id="Q9ZT94"/>
<dbReference type="Araport" id="AT4G02960"/>
<dbReference type="TAIR" id="AT4G02960"/>
<dbReference type="InParanoid" id="Q9ZT94"/>
<dbReference type="PRO" id="PR:Q9ZT94"/>
<dbReference type="Proteomes" id="UP000006548">
    <property type="component" value="Chromosome 4"/>
</dbReference>
<dbReference type="ExpressionAtlas" id="Q9ZT94">
    <property type="expression patterns" value="baseline and differential"/>
</dbReference>
<dbReference type="GO" id="GO:0004190">
    <property type="term" value="F:aspartic-type endopeptidase activity"/>
    <property type="evidence" value="ECO:0007669"/>
    <property type="project" value="UniProtKB-KW"/>
</dbReference>
<dbReference type="GO" id="GO:0004519">
    <property type="term" value="F:endonuclease activity"/>
    <property type="evidence" value="ECO:0007669"/>
    <property type="project" value="UniProtKB-KW"/>
</dbReference>
<dbReference type="GO" id="GO:0003676">
    <property type="term" value="F:nucleic acid binding"/>
    <property type="evidence" value="ECO:0007669"/>
    <property type="project" value="InterPro"/>
</dbReference>
<dbReference type="GO" id="GO:0003964">
    <property type="term" value="F:RNA-directed DNA polymerase activity"/>
    <property type="evidence" value="ECO:0007669"/>
    <property type="project" value="UniProtKB-EC"/>
</dbReference>
<dbReference type="GO" id="GO:0008270">
    <property type="term" value="F:zinc ion binding"/>
    <property type="evidence" value="ECO:0007669"/>
    <property type="project" value="UniProtKB-KW"/>
</dbReference>
<dbReference type="GO" id="GO:0015074">
    <property type="term" value="P:DNA integration"/>
    <property type="evidence" value="ECO:0007669"/>
    <property type="project" value="UniProtKB-KW"/>
</dbReference>
<dbReference type="GO" id="GO:0006310">
    <property type="term" value="P:DNA recombination"/>
    <property type="evidence" value="ECO:0007669"/>
    <property type="project" value="UniProtKB-KW"/>
</dbReference>
<dbReference type="GO" id="GO:0006508">
    <property type="term" value="P:proteolysis"/>
    <property type="evidence" value="ECO:0007669"/>
    <property type="project" value="UniProtKB-KW"/>
</dbReference>
<dbReference type="CDD" id="cd09272">
    <property type="entry name" value="RNase_HI_RT_Ty1"/>
    <property type="match status" value="1"/>
</dbReference>
<dbReference type="Gene3D" id="3.30.420.10">
    <property type="entry name" value="Ribonuclease H-like superfamily/Ribonuclease H"/>
    <property type="match status" value="1"/>
</dbReference>
<dbReference type="InterPro" id="IPR043502">
    <property type="entry name" value="DNA/RNA_pol_sf"/>
</dbReference>
<dbReference type="InterPro" id="IPR025724">
    <property type="entry name" value="GAG-pre-integrase_dom"/>
</dbReference>
<dbReference type="InterPro" id="IPR001584">
    <property type="entry name" value="Integrase_cat-core"/>
</dbReference>
<dbReference type="InterPro" id="IPR054722">
    <property type="entry name" value="PolX-like_BBD"/>
</dbReference>
<dbReference type="InterPro" id="IPR012337">
    <property type="entry name" value="RNaseH-like_sf"/>
</dbReference>
<dbReference type="InterPro" id="IPR036397">
    <property type="entry name" value="RNaseH_sf"/>
</dbReference>
<dbReference type="InterPro" id="IPR013103">
    <property type="entry name" value="RVT_2"/>
</dbReference>
<dbReference type="PANTHER" id="PTHR11439">
    <property type="entry name" value="GAG-POL-RELATED RETROTRANSPOSON"/>
    <property type="match status" value="1"/>
</dbReference>
<dbReference type="PANTHER" id="PTHR11439:SF489">
    <property type="entry name" value="RNA-DIRECTED DNA POLYMERASE"/>
    <property type="match status" value="1"/>
</dbReference>
<dbReference type="Pfam" id="PF13976">
    <property type="entry name" value="gag_pre-integrs"/>
    <property type="match status" value="1"/>
</dbReference>
<dbReference type="Pfam" id="PF22936">
    <property type="entry name" value="Pol_BBD"/>
    <property type="match status" value="1"/>
</dbReference>
<dbReference type="Pfam" id="PF14223">
    <property type="entry name" value="Retrotran_gag_2"/>
    <property type="match status" value="1"/>
</dbReference>
<dbReference type="Pfam" id="PF00665">
    <property type="entry name" value="rve"/>
    <property type="match status" value="1"/>
</dbReference>
<dbReference type="Pfam" id="PF07727">
    <property type="entry name" value="RVT_2"/>
    <property type="match status" value="1"/>
</dbReference>
<dbReference type="SUPFAM" id="SSF56672">
    <property type="entry name" value="DNA/RNA polymerases"/>
    <property type="match status" value="1"/>
</dbReference>
<dbReference type="SUPFAM" id="SSF53098">
    <property type="entry name" value="Ribonuclease H-like"/>
    <property type="match status" value="1"/>
</dbReference>
<dbReference type="PROSITE" id="PS50994">
    <property type="entry name" value="INTEGRASE"/>
    <property type="match status" value="1"/>
</dbReference>
<comment type="catalytic activity">
    <reaction>
        <text>DNA(n) + a 2'-deoxyribonucleoside 5'-triphosphate = DNA(n+1) + diphosphate</text>
        <dbReference type="Rhea" id="RHEA:22508"/>
        <dbReference type="Rhea" id="RHEA-COMP:17339"/>
        <dbReference type="Rhea" id="RHEA-COMP:17340"/>
        <dbReference type="ChEBI" id="CHEBI:33019"/>
        <dbReference type="ChEBI" id="CHEBI:61560"/>
        <dbReference type="ChEBI" id="CHEBI:173112"/>
        <dbReference type="EC" id="2.7.7.49"/>
    </reaction>
</comment>
<comment type="sequence caution" evidence="8">
    <conflict type="erroneous gene model prediction">
        <sequence resource="EMBL-CDS" id="BAA78424"/>
    </conflict>
</comment>
<comment type="sequence caution" evidence="8">
    <conflict type="erroneous gene model prediction">
        <sequence resource="EMBL-CDS" id="BAM44533"/>
    </conflict>
</comment>
<sequence>MATHAEEIVLVNTNILNVNMSNVTKLTSTNYLMWSRQVHALFDGYELAGFLDGSTPMPPATIGTDAVPRVNPDYTRWRRQDKLIYSAILGAISMSVQPAVSRATTAAQIWETLRKIYANPSYGHVTQLRFITRFDQLALLGKPMDHDEQVERVLENLPDDYKPVIDQIAAKDTPPSLTEIHERLINRESKLLALNSAEVVPITANVVTHRNTNTNRNQNNRGDNRNYNNNNNRSNSWQPSSSGSRSDNRQPKPYLGRCQICSVQGHSAKRCPQLHQFQSTTNQQQSTSPFTPWQPRANLAVNSPYNANNWLLDSGATHHITSDFNNLSFHQPYTGGDDVMIADGSTIPITHTGSASLPTSSRSLDLNKVLYVPNIHKNLISVYRLCNTNRVSVEFFPASFQVKDLNTGVPLLQGKTKDELYEWPIASSQAVSMFASPCSKATHSSWHSRLGHPSLAILNSVISNHSLPVLNPSHKLLSCSDCFINKSHKVPFSNSTITSSKPLEYIYSDVWSSPILSIDNYRYYVIFVDHFTRYTWLYPLKQKSQVKDTFIIFKSLVENRFQTRIGTLYSDNGGEFVVLRDYLSQHGISHFTSPPHTPEHNGLSERKHRHIVEMGLTLLSHASVPKTYWPYAFSVAVYLINRLPTPLLQLQSPFQKLFGQPPNYEKLKVFGCACYPWLRPYNRHKLEDKSKQCAFMGYSLTQSAYLCLHIPTGRLYTSRHVQFDERCFPFSTTNFGVSTSQEQRSDSAPNWPSHTTLPTTPLVLPAPPCLGPHLDTSPRPPSSPSPLCTTQVSSSNLPSSSISSPSSSEPTAPSHNGPQPTAQPHQTQNSNSNSPILNNPNPNSPSPNSPNQNSPLPQSPISSPHIPTPSTSISEPNSPSSSSTSTPPLPPVLPAPPIIQVNAQAPVNTHSMATRAKDGIRKPNQKYSYATSLAANSEPRTAIQAMKDDRWRQAMGSEINAQIGNHTWDLVPPPPPSVTIVGCRWIFTKKFNSDGSLNRYKARLVAKGYNQRPGLDYAETFSPVIKSTSIRIVLGVAVDRSWPIRQLDVNNAFLQGTLTDEVYMSQPPGFVDKDRPDYVCRLRKAIYGLKQAPRAWYVELRTYLLTVGFVNSISDTSLFVLQRGRSIIYMLVYVDDILITGNDTVLLKHTLDALSQRFSVKEHEDLHYFLGIEAKRVPQGLHLSQRRYTLDLLARTNMLTAKPVATPMATSPKLTLHSGTKLPDPTEYRGIVGSLQYLAFTRPDLSYAVNRLSQYMHMPTDDHWNALKRVLRYLAGTPDHGIFLKKGNTLSLHAYSDADWAGDTDDYVSTNGYIVYLGHHPISWSSKKQKGVVRSSTEAEYRSVANTSSELQWICSLLTELGIQLSHPPVIYCDNVGATYLCANPVFHSRMKHIALDYHFIRNQVQSGALRVVHVSTHDQLADTLTKPLSRVAFQNFSRKIGVIKVPPSCGGVLRI</sequence>
<keyword id="KW-0064">Aspartyl protease</keyword>
<keyword id="KW-0229">DNA integration</keyword>
<keyword id="KW-0233">DNA recombination</keyword>
<keyword id="KW-0255">Endonuclease</keyword>
<keyword id="KW-0378">Hydrolase</keyword>
<keyword id="KW-0460">Magnesium</keyword>
<keyword id="KW-0479">Metal-binding</keyword>
<keyword id="KW-0540">Nuclease</keyword>
<keyword id="KW-0645">Protease</keyword>
<keyword id="KW-1185">Reference proteome</keyword>
<keyword id="KW-0808">Transferase</keyword>
<keyword id="KW-0862">Zinc</keyword>
<keyword id="KW-0863">Zinc-finger</keyword>
<protein>
    <recommendedName>
        <fullName>Retrovirus-related Pol polyprotein from transposon RE2</fullName>
    </recommendedName>
    <alternativeName>
        <fullName evidence="7">Retro element 2</fullName>
        <shortName evidence="7">AtRE2</shortName>
    </alternativeName>
    <domain>
        <recommendedName>
            <fullName>Protease RE2</fullName>
            <ecNumber>3.4.23.-</ecNumber>
        </recommendedName>
    </domain>
    <domain>
        <recommendedName>
            <fullName>Reverse transcriptase RE2</fullName>
            <ecNumber>2.7.7.49</ecNumber>
        </recommendedName>
    </domain>
    <domain>
        <recommendedName>
            <fullName>Endonuclease RE2</fullName>
        </recommendedName>
    </domain>
</protein>
<gene>
    <name type="primary">RE2</name>
    <name evidence="10" type="ordered locus">At4g02960</name>
    <name evidence="9" type="ORF">T4I9.16</name>
</gene>
<name>POLR2_ARATH</name>